<protein>
    <recommendedName>
        <fullName>Synaptophysin</fullName>
    </recommendedName>
    <alternativeName>
        <fullName>BM89 antigen</fullName>
    </alternativeName>
    <alternativeName>
        <fullName>Major synaptic vesicle protein p38</fullName>
    </alternativeName>
</protein>
<sequence>MLLLADMDVVNQLVAGGQFRVVKEPLGFVKVLQWVFAIFAFATCGSYTGELRLSVECANKTESALNIEVEFEYPFRLHQVYFDAPSCVKGGTTKIFLVGDYSSSAEFFVTVAVFAFLYSMGALATYIFLQNKYRENNKGPMMDFLATAVFAFMWLVSSSAWAKGLSDVKMATDPENIIKEMPMCRQTGNTCKELRDPVTSGLNTSVVFGFLNLVLWVGNLWFVFKETGWAAPFMRAPPGAPEKQPAPGDAYGDAGYGQGPGGYGPQDSYGPQGGYQPDYGQPASGGGGGYGPQGDYGQQGYGQQGAPTSFSNQM</sequence>
<reference key="1">
    <citation type="journal article" date="2005" name="Science">
        <title>The transcriptional landscape of the mammalian genome.</title>
        <authorList>
            <person name="Carninci P."/>
            <person name="Kasukawa T."/>
            <person name="Katayama S."/>
            <person name="Gough J."/>
            <person name="Frith M.C."/>
            <person name="Maeda N."/>
            <person name="Oyama R."/>
            <person name="Ravasi T."/>
            <person name="Lenhard B."/>
            <person name="Wells C."/>
            <person name="Kodzius R."/>
            <person name="Shimokawa K."/>
            <person name="Bajic V.B."/>
            <person name="Brenner S.E."/>
            <person name="Batalov S."/>
            <person name="Forrest A.R."/>
            <person name="Zavolan M."/>
            <person name="Davis M.J."/>
            <person name="Wilming L.G."/>
            <person name="Aidinis V."/>
            <person name="Allen J.E."/>
            <person name="Ambesi-Impiombato A."/>
            <person name="Apweiler R."/>
            <person name="Aturaliya R.N."/>
            <person name="Bailey T.L."/>
            <person name="Bansal M."/>
            <person name="Baxter L."/>
            <person name="Beisel K.W."/>
            <person name="Bersano T."/>
            <person name="Bono H."/>
            <person name="Chalk A.M."/>
            <person name="Chiu K.P."/>
            <person name="Choudhary V."/>
            <person name="Christoffels A."/>
            <person name="Clutterbuck D.R."/>
            <person name="Crowe M.L."/>
            <person name="Dalla E."/>
            <person name="Dalrymple B.P."/>
            <person name="de Bono B."/>
            <person name="Della Gatta G."/>
            <person name="di Bernardo D."/>
            <person name="Down T."/>
            <person name="Engstrom P."/>
            <person name="Fagiolini M."/>
            <person name="Faulkner G."/>
            <person name="Fletcher C.F."/>
            <person name="Fukushima T."/>
            <person name="Furuno M."/>
            <person name="Futaki S."/>
            <person name="Gariboldi M."/>
            <person name="Georgii-Hemming P."/>
            <person name="Gingeras T.R."/>
            <person name="Gojobori T."/>
            <person name="Green R.E."/>
            <person name="Gustincich S."/>
            <person name="Harbers M."/>
            <person name="Hayashi Y."/>
            <person name="Hensch T.K."/>
            <person name="Hirokawa N."/>
            <person name="Hill D."/>
            <person name="Huminiecki L."/>
            <person name="Iacono M."/>
            <person name="Ikeo K."/>
            <person name="Iwama A."/>
            <person name="Ishikawa T."/>
            <person name="Jakt M."/>
            <person name="Kanapin A."/>
            <person name="Katoh M."/>
            <person name="Kawasawa Y."/>
            <person name="Kelso J."/>
            <person name="Kitamura H."/>
            <person name="Kitano H."/>
            <person name="Kollias G."/>
            <person name="Krishnan S.P."/>
            <person name="Kruger A."/>
            <person name="Kummerfeld S.K."/>
            <person name="Kurochkin I.V."/>
            <person name="Lareau L.F."/>
            <person name="Lazarevic D."/>
            <person name="Lipovich L."/>
            <person name="Liu J."/>
            <person name="Liuni S."/>
            <person name="McWilliam S."/>
            <person name="Madan Babu M."/>
            <person name="Madera M."/>
            <person name="Marchionni L."/>
            <person name="Matsuda H."/>
            <person name="Matsuzawa S."/>
            <person name="Miki H."/>
            <person name="Mignone F."/>
            <person name="Miyake S."/>
            <person name="Morris K."/>
            <person name="Mottagui-Tabar S."/>
            <person name="Mulder N."/>
            <person name="Nakano N."/>
            <person name="Nakauchi H."/>
            <person name="Ng P."/>
            <person name="Nilsson R."/>
            <person name="Nishiguchi S."/>
            <person name="Nishikawa S."/>
            <person name="Nori F."/>
            <person name="Ohara O."/>
            <person name="Okazaki Y."/>
            <person name="Orlando V."/>
            <person name="Pang K.C."/>
            <person name="Pavan W.J."/>
            <person name="Pavesi G."/>
            <person name="Pesole G."/>
            <person name="Petrovsky N."/>
            <person name="Piazza S."/>
            <person name="Reed J."/>
            <person name="Reid J.F."/>
            <person name="Ring B.Z."/>
            <person name="Ringwald M."/>
            <person name="Rost B."/>
            <person name="Ruan Y."/>
            <person name="Salzberg S.L."/>
            <person name="Sandelin A."/>
            <person name="Schneider C."/>
            <person name="Schoenbach C."/>
            <person name="Sekiguchi K."/>
            <person name="Semple C.A."/>
            <person name="Seno S."/>
            <person name="Sessa L."/>
            <person name="Sheng Y."/>
            <person name="Shibata Y."/>
            <person name="Shimada H."/>
            <person name="Shimada K."/>
            <person name="Silva D."/>
            <person name="Sinclair B."/>
            <person name="Sperling S."/>
            <person name="Stupka E."/>
            <person name="Sugiura K."/>
            <person name="Sultana R."/>
            <person name="Takenaka Y."/>
            <person name="Taki K."/>
            <person name="Tammoja K."/>
            <person name="Tan S.L."/>
            <person name="Tang S."/>
            <person name="Taylor M.S."/>
            <person name="Tegner J."/>
            <person name="Teichmann S.A."/>
            <person name="Ueda H.R."/>
            <person name="van Nimwegen E."/>
            <person name="Verardo R."/>
            <person name="Wei C.L."/>
            <person name="Yagi K."/>
            <person name="Yamanishi H."/>
            <person name="Zabarovsky E."/>
            <person name="Zhu S."/>
            <person name="Zimmer A."/>
            <person name="Hide W."/>
            <person name="Bult C."/>
            <person name="Grimmond S.M."/>
            <person name="Teasdale R.D."/>
            <person name="Liu E.T."/>
            <person name="Brusic V."/>
            <person name="Quackenbush J."/>
            <person name="Wahlestedt C."/>
            <person name="Mattick J.S."/>
            <person name="Hume D.A."/>
            <person name="Kai C."/>
            <person name="Sasaki D."/>
            <person name="Tomaru Y."/>
            <person name="Fukuda S."/>
            <person name="Kanamori-Katayama M."/>
            <person name="Suzuki M."/>
            <person name="Aoki J."/>
            <person name="Arakawa T."/>
            <person name="Iida J."/>
            <person name="Imamura K."/>
            <person name="Itoh M."/>
            <person name="Kato T."/>
            <person name="Kawaji H."/>
            <person name="Kawagashira N."/>
            <person name="Kawashima T."/>
            <person name="Kojima M."/>
            <person name="Kondo S."/>
            <person name="Konno H."/>
            <person name="Nakano K."/>
            <person name="Ninomiya N."/>
            <person name="Nishio T."/>
            <person name="Okada M."/>
            <person name="Plessy C."/>
            <person name="Shibata K."/>
            <person name="Shiraki T."/>
            <person name="Suzuki S."/>
            <person name="Tagami M."/>
            <person name="Waki K."/>
            <person name="Watahiki A."/>
            <person name="Okamura-Oho Y."/>
            <person name="Suzuki H."/>
            <person name="Kawai J."/>
            <person name="Hayashizaki Y."/>
        </authorList>
    </citation>
    <scope>NUCLEOTIDE SEQUENCE [LARGE SCALE MRNA]</scope>
    <source>
        <strain>C57BL/6J</strain>
        <tissue>Brain cortex</tissue>
    </source>
</reference>
<reference key="2">
    <citation type="journal article" date="1997" name="J. Neurosci. Res.">
        <title>Purification and cDNA cloning of mouse BM89 antigen shows that it is identical with the synaptic vesicle protein synaptophysin.</title>
        <authorList>
            <person name="Gaitanou M."/>
            <person name="Mamalaki A."/>
            <person name="Merkouri E."/>
            <person name="Matsas R."/>
        </authorList>
    </citation>
    <scope>NUCLEOTIDE SEQUENCE [MRNA] OF 7-314</scope>
    <source>
        <strain>C57BL/6J</strain>
        <tissue>Brain</tissue>
    </source>
</reference>
<reference key="3">
    <citation type="journal article" date="2004" name="Genome Res.">
        <title>The status, quality, and expansion of the NIH full-length cDNA project: the Mammalian Gene Collection (MGC).</title>
        <authorList>
            <consortium name="The MGC Project Team"/>
        </authorList>
    </citation>
    <scope>NUCLEOTIDE SEQUENCE [LARGE SCALE MRNA] OF 7-314</scope>
    <source>
        <tissue>Eye</tissue>
    </source>
</reference>
<reference key="4">
    <citation type="submission" date="2007-04" db="UniProtKB">
        <authorList>
            <person name="Lubec G."/>
            <person name="Kang S.U."/>
        </authorList>
    </citation>
    <scope>PROTEIN SEQUENCE OF 77-89; 170-179 AND 226-235</scope>
    <scope>IDENTIFICATION BY MASS SPECTROMETRY</scope>
    <source>
        <strain>C57BL/6J</strain>
        <tissue>Brain</tissue>
    </source>
</reference>
<reference key="5">
    <citation type="journal article" date="1999" name="Neuron">
        <title>Essential roles in synaptic plasticity for synaptogyrin I and synaptophysin I.</title>
        <authorList>
            <person name="Janz R."/>
            <person name="Suedhof T.C."/>
            <person name="Hammer R.E."/>
            <person name="Unni V."/>
            <person name="Siegelbaum S.A."/>
            <person name="Bolshakov V.Y."/>
        </authorList>
    </citation>
    <scope>FUNCTION</scope>
    <scope>DISRUPTION PHENOTYPE</scope>
</reference>
<reference key="6">
    <citation type="journal article" date="2008" name="J. Proteome Res.">
        <title>Large-scale identification and evolution indexing of tyrosine phosphorylation sites from murine brain.</title>
        <authorList>
            <person name="Ballif B.A."/>
            <person name="Carey G.R."/>
            <person name="Sunyaev S.R."/>
            <person name="Gygi S.P."/>
        </authorList>
    </citation>
    <scope>PHOSPHORYLATION [LARGE SCALE ANALYSIS] AT TYR-81</scope>
    <scope>IDENTIFICATION BY MASS SPECTROMETRY [LARGE SCALE ANALYSIS]</scope>
    <source>
        <tissue>Brain</tissue>
    </source>
</reference>
<reference key="7">
    <citation type="journal article" date="2009" name="J. Neurochem.">
        <title>Sept8 controls the binding of vesicle-associated membrane protein 2 to synaptophysin.</title>
        <authorList>
            <person name="Ito H."/>
            <person name="Atsuzawa K."/>
            <person name="Morishita R."/>
            <person name="Usuda N."/>
            <person name="Sudo K."/>
            <person name="Iwamoto I."/>
            <person name="Mizutani K."/>
            <person name="Katoh-Semba R."/>
            <person name="Nozawa Y."/>
            <person name="Asano T."/>
            <person name="Nagata K."/>
        </authorList>
    </citation>
    <scope>INTERACTION WITH VAMP2</scope>
</reference>
<reference key="8">
    <citation type="journal article" date="2010" name="Cell">
        <title>A tissue-specific atlas of mouse protein phosphorylation and expression.</title>
        <authorList>
            <person name="Huttlin E.L."/>
            <person name="Jedrychowski M.P."/>
            <person name="Elias J.E."/>
            <person name="Goswami T."/>
            <person name="Rad R."/>
            <person name="Beausoleil S.A."/>
            <person name="Villen J."/>
            <person name="Haas W."/>
            <person name="Sowa M.E."/>
            <person name="Gygi S.P."/>
        </authorList>
    </citation>
    <scope>PHOSPHORYLATION [LARGE SCALE ANALYSIS] AT TYR-81</scope>
    <scope>IDENTIFICATION BY MASS SPECTROMETRY [LARGE SCALE ANALYSIS]</scope>
    <source>
        <tissue>Brain</tissue>
    </source>
</reference>
<reference key="9">
    <citation type="journal article" date="2014" name="Cell">
        <title>Glucose regulates mitochondrial motility via Milton modification by O-GlcNAc transferase.</title>
        <authorList>
            <person name="Pekkurnaz G."/>
            <person name="Trinidad J.C."/>
            <person name="Wang X."/>
            <person name="Kong D."/>
            <person name="Schwarz T.L."/>
        </authorList>
    </citation>
    <scope>SUBCELLULAR LOCATION</scope>
</reference>
<name>SYPH_MOUSE</name>
<accession>Q62277</accession>
<accession>Q8BRQ0</accession>
<accession>Q91WI8</accession>
<dbReference type="EMBL" id="AK043756">
    <property type="protein sequence ID" value="BAC31642.1"/>
    <property type="molecule type" value="mRNA"/>
</dbReference>
<dbReference type="EMBL" id="X95818">
    <property type="protein sequence ID" value="CAA65084.1"/>
    <property type="molecule type" value="mRNA"/>
</dbReference>
<dbReference type="EMBL" id="BC014823">
    <property type="protein sequence ID" value="AAH14823.1"/>
    <property type="molecule type" value="mRNA"/>
</dbReference>
<dbReference type="CCDS" id="CCDS29967.2"/>
<dbReference type="RefSeq" id="NP_033331.2">
    <property type="nucleotide sequence ID" value="NM_009305.2"/>
</dbReference>
<dbReference type="PDB" id="9BRA">
    <property type="method" value="EM"/>
    <property type="resolution" value="4.30 A"/>
    <property type="chains" value="s=1-314"/>
</dbReference>
<dbReference type="PDB" id="9BRQ">
    <property type="method" value="EM"/>
    <property type="resolution" value="4.30 A"/>
    <property type="chains" value="s=1-314"/>
</dbReference>
<dbReference type="PDB" id="9BRT">
    <property type="method" value="EM"/>
    <property type="resolution" value="4.30 A"/>
    <property type="chains" value="s=1-314"/>
</dbReference>
<dbReference type="PDB" id="9BRZ">
    <property type="method" value="EM"/>
    <property type="resolution" value="3.80 A"/>
    <property type="chains" value="s=1-314"/>
</dbReference>
<dbReference type="PDBsum" id="9BRA"/>
<dbReference type="PDBsum" id="9BRQ"/>
<dbReference type="PDBsum" id="9BRT"/>
<dbReference type="PDBsum" id="9BRZ"/>
<dbReference type="EMDB" id="EMD-44839"/>
<dbReference type="EMDB" id="EMD-44840"/>
<dbReference type="EMDB" id="EMD-44843"/>
<dbReference type="EMDB" id="EMD-44846"/>
<dbReference type="SMR" id="Q62277"/>
<dbReference type="BioGRID" id="203609">
    <property type="interactions" value="40"/>
</dbReference>
<dbReference type="FunCoup" id="Q62277">
    <property type="interactions" value="826"/>
</dbReference>
<dbReference type="IntAct" id="Q62277">
    <property type="interactions" value="18"/>
</dbReference>
<dbReference type="MINT" id="Q62277"/>
<dbReference type="STRING" id="10090.ENSMUSP00000069429"/>
<dbReference type="GlyCosmos" id="Q62277">
    <property type="glycosylation" value="1 site, No reported glycans"/>
</dbReference>
<dbReference type="GlyGen" id="Q62277">
    <property type="glycosylation" value="2 sites, 1 N-linked glycan (1 site), 1 O-linked glycan (1 site)"/>
</dbReference>
<dbReference type="iPTMnet" id="Q62277"/>
<dbReference type="PhosphoSitePlus" id="Q62277"/>
<dbReference type="SwissPalm" id="Q62277"/>
<dbReference type="PaxDb" id="10090-ENSMUSP00000069429"/>
<dbReference type="PeptideAtlas" id="Q62277"/>
<dbReference type="ProteomicsDB" id="253441"/>
<dbReference type="Antibodypedia" id="501">
    <property type="antibodies" value="1399 antibodies from 54 providers"/>
</dbReference>
<dbReference type="DNASU" id="20977"/>
<dbReference type="Ensembl" id="ENSMUST00000069520.11">
    <property type="protein sequence ID" value="ENSMUSP00000069429.5"/>
    <property type="gene ID" value="ENSMUSG00000031144.16"/>
</dbReference>
<dbReference type="GeneID" id="20977"/>
<dbReference type="KEGG" id="mmu:20977"/>
<dbReference type="UCSC" id="uc009slr.2">
    <property type="organism name" value="mouse"/>
</dbReference>
<dbReference type="AGR" id="MGI:98467"/>
<dbReference type="CTD" id="6855"/>
<dbReference type="MGI" id="MGI:98467">
    <property type="gene designation" value="Syp"/>
</dbReference>
<dbReference type="VEuPathDB" id="HostDB:ENSMUSG00000031144"/>
<dbReference type="eggNOG" id="ENOG502QT4W">
    <property type="taxonomic scope" value="Eukaryota"/>
</dbReference>
<dbReference type="GeneTree" id="ENSGT01030000234637"/>
<dbReference type="HOGENOM" id="CLU_064642_0_0_1"/>
<dbReference type="InParanoid" id="Q62277"/>
<dbReference type="OMA" id="FVKLLEW"/>
<dbReference type="OrthoDB" id="10006326at2759"/>
<dbReference type="PhylomeDB" id="Q62277"/>
<dbReference type="TreeFam" id="TF315804"/>
<dbReference type="BioGRID-ORCS" id="20977">
    <property type="hits" value="1 hit in 79 CRISPR screens"/>
</dbReference>
<dbReference type="CD-CODE" id="CE726F99">
    <property type="entry name" value="Postsynaptic density"/>
</dbReference>
<dbReference type="ChiTaRS" id="Syp">
    <property type="organism name" value="mouse"/>
</dbReference>
<dbReference type="PRO" id="PR:Q62277"/>
<dbReference type="Proteomes" id="UP000000589">
    <property type="component" value="Chromosome X"/>
</dbReference>
<dbReference type="RNAct" id="Q62277">
    <property type="molecule type" value="protein"/>
</dbReference>
<dbReference type="Bgee" id="ENSMUSG00000031144">
    <property type="expression patterns" value="Expressed in retinal neural layer and 181 other cell types or tissues"/>
</dbReference>
<dbReference type="ExpressionAtlas" id="Q62277">
    <property type="expression patterns" value="baseline and differential"/>
</dbReference>
<dbReference type="GO" id="GO:0060203">
    <property type="term" value="C:clathrin-sculpted glutamate transport vesicle membrane"/>
    <property type="evidence" value="ECO:0000304"/>
    <property type="project" value="Reactome"/>
</dbReference>
<dbReference type="GO" id="GO:0060076">
    <property type="term" value="C:excitatory synapse"/>
    <property type="evidence" value="ECO:0000314"/>
    <property type="project" value="MGI"/>
</dbReference>
<dbReference type="GO" id="GO:0016020">
    <property type="term" value="C:membrane"/>
    <property type="evidence" value="ECO:0000314"/>
    <property type="project" value="MGI"/>
</dbReference>
<dbReference type="GO" id="GO:0031594">
    <property type="term" value="C:neuromuscular junction"/>
    <property type="evidence" value="ECO:0000314"/>
    <property type="project" value="MGI"/>
</dbReference>
<dbReference type="GO" id="GO:0043005">
    <property type="term" value="C:neuron projection"/>
    <property type="evidence" value="ECO:0000314"/>
    <property type="project" value="ParkinsonsUK-UCL"/>
</dbReference>
<dbReference type="GO" id="GO:0044306">
    <property type="term" value="C:neuron projection terminus"/>
    <property type="evidence" value="ECO:0000314"/>
    <property type="project" value="MGI"/>
</dbReference>
<dbReference type="GO" id="GO:0048471">
    <property type="term" value="C:perinuclear region of cytoplasm"/>
    <property type="evidence" value="ECO:0000314"/>
    <property type="project" value="MGI"/>
</dbReference>
<dbReference type="GO" id="GO:0098793">
    <property type="term" value="C:presynapse"/>
    <property type="evidence" value="ECO:0000314"/>
    <property type="project" value="MGI"/>
</dbReference>
<dbReference type="GO" id="GO:0048786">
    <property type="term" value="C:presynaptic active zone"/>
    <property type="evidence" value="ECO:0000314"/>
    <property type="project" value="BHF-UCL"/>
</dbReference>
<dbReference type="GO" id="GO:0042734">
    <property type="term" value="C:presynaptic membrane"/>
    <property type="evidence" value="ECO:0000314"/>
    <property type="project" value="UniProtKB"/>
</dbReference>
<dbReference type="GO" id="GO:0098685">
    <property type="term" value="C:Schaffer collateral - CA1 synapse"/>
    <property type="evidence" value="ECO:0000314"/>
    <property type="project" value="SynGO"/>
</dbReference>
<dbReference type="GO" id="GO:0045202">
    <property type="term" value="C:synapse"/>
    <property type="evidence" value="ECO:0000314"/>
    <property type="project" value="MGI"/>
</dbReference>
<dbReference type="GO" id="GO:0008021">
    <property type="term" value="C:synaptic vesicle"/>
    <property type="evidence" value="ECO:0000314"/>
    <property type="project" value="MGI"/>
</dbReference>
<dbReference type="GO" id="GO:0030672">
    <property type="term" value="C:synaptic vesicle membrane"/>
    <property type="evidence" value="ECO:0000314"/>
    <property type="project" value="MGI"/>
</dbReference>
<dbReference type="GO" id="GO:0043195">
    <property type="term" value="C:terminal bouton"/>
    <property type="evidence" value="ECO:0000314"/>
    <property type="project" value="MGI"/>
</dbReference>
<dbReference type="GO" id="GO:0015485">
    <property type="term" value="F:cholesterol binding"/>
    <property type="evidence" value="ECO:0007669"/>
    <property type="project" value="Ensembl"/>
</dbReference>
<dbReference type="GO" id="GO:0042802">
    <property type="term" value="F:identical protein binding"/>
    <property type="evidence" value="ECO:0000353"/>
    <property type="project" value="MGI"/>
</dbReference>
<dbReference type="GO" id="GO:0042169">
    <property type="term" value="F:SH2 domain binding"/>
    <property type="evidence" value="ECO:0000314"/>
    <property type="project" value="MGI"/>
</dbReference>
<dbReference type="GO" id="GO:0017075">
    <property type="term" value="F:syntaxin-1 binding"/>
    <property type="evidence" value="ECO:0000266"/>
    <property type="project" value="MGI"/>
</dbReference>
<dbReference type="GO" id="GO:0007268">
    <property type="term" value="P:chemical synaptic transmission"/>
    <property type="evidence" value="ECO:0000304"/>
    <property type="project" value="MGI"/>
</dbReference>
<dbReference type="GO" id="GO:0006897">
    <property type="term" value="P:endocytosis"/>
    <property type="evidence" value="ECO:0000250"/>
    <property type="project" value="UniProtKB"/>
</dbReference>
<dbReference type="GO" id="GO:0050804">
    <property type="term" value="P:modulation of chemical synaptic transmission"/>
    <property type="evidence" value="ECO:0000314"/>
    <property type="project" value="SynGO"/>
</dbReference>
<dbReference type="GO" id="GO:0048169">
    <property type="term" value="P:regulation of long-term neuronal synaptic plasticity"/>
    <property type="evidence" value="ECO:0000315"/>
    <property type="project" value="UniProtKB"/>
</dbReference>
<dbReference type="GO" id="GO:2000474">
    <property type="term" value="P:regulation of opioid receptor signaling pathway"/>
    <property type="evidence" value="ECO:0000250"/>
    <property type="project" value="UniProtKB"/>
</dbReference>
<dbReference type="GO" id="GO:0048172">
    <property type="term" value="P:regulation of short-term neuronal synaptic plasticity"/>
    <property type="evidence" value="ECO:0000315"/>
    <property type="project" value="UniProtKB"/>
</dbReference>
<dbReference type="GO" id="GO:0010807">
    <property type="term" value="P:regulation of synaptic vesicle priming"/>
    <property type="evidence" value="ECO:0000314"/>
    <property type="project" value="SynGO"/>
</dbReference>
<dbReference type="InterPro" id="IPR008253">
    <property type="entry name" value="Marvel"/>
</dbReference>
<dbReference type="InterPro" id="IPR001285">
    <property type="entry name" value="Synaptophysin/porin"/>
</dbReference>
<dbReference type="PANTHER" id="PTHR10306">
    <property type="entry name" value="SYNAPTOPHYSIN"/>
    <property type="match status" value="1"/>
</dbReference>
<dbReference type="PANTHER" id="PTHR10306:SF10">
    <property type="entry name" value="SYNAPTOPHYSIN"/>
    <property type="match status" value="1"/>
</dbReference>
<dbReference type="Pfam" id="PF01284">
    <property type="entry name" value="MARVEL"/>
    <property type="match status" value="1"/>
</dbReference>
<dbReference type="PRINTS" id="PR00220">
    <property type="entry name" value="SYNAPTOPHYSN"/>
</dbReference>
<dbReference type="PROSITE" id="PS51225">
    <property type="entry name" value="MARVEL"/>
    <property type="match status" value="1"/>
</dbReference>
<dbReference type="PROSITE" id="PS00604">
    <property type="entry name" value="SYNAPTOP"/>
    <property type="match status" value="1"/>
</dbReference>
<gene>
    <name type="primary">Syp</name>
</gene>
<evidence type="ECO:0000250" key="1"/>
<evidence type="ECO:0000250" key="2">
    <source>
        <dbReference type="UniProtKB" id="P07825"/>
    </source>
</evidence>
<evidence type="ECO:0000250" key="3">
    <source>
        <dbReference type="UniProtKB" id="P08247"/>
    </source>
</evidence>
<evidence type="ECO:0000255" key="4"/>
<evidence type="ECO:0000255" key="5">
    <source>
        <dbReference type="PROSITE-ProRule" id="PRU00581"/>
    </source>
</evidence>
<evidence type="ECO:0000256" key="6">
    <source>
        <dbReference type="SAM" id="MobiDB-lite"/>
    </source>
</evidence>
<evidence type="ECO:0000269" key="7">
    <source>
    </source>
</evidence>
<evidence type="ECO:0000269" key="8">
    <source>
    </source>
</evidence>
<evidence type="ECO:0000269" key="9">
    <source>
    </source>
</evidence>
<evidence type="ECO:0000305" key="10"/>
<evidence type="ECO:0007744" key="11">
    <source>
    </source>
</evidence>
<evidence type="ECO:0007744" key="12">
    <source>
    </source>
</evidence>
<keyword id="KW-0002">3D-structure</keyword>
<keyword id="KW-0106">Calcium</keyword>
<keyword id="KW-0968">Cytoplasmic vesicle</keyword>
<keyword id="KW-0903">Direct protein sequencing</keyword>
<keyword id="KW-0325">Glycoprotein</keyword>
<keyword id="KW-0472">Membrane</keyword>
<keyword id="KW-0597">Phosphoprotein</keyword>
<keyword id="KW-1185">Reference proteome</keyword>
<keyword id="KW-0677">Repeat</keyword>
<keyword id="KW-0770">Synapse</keyword>
<keyword id="KW-0771">Synaptosome</keyword>
<keyword id="KW-0812">Transmembrane</keyword>
<keyword id="KW-1133">Transmembrane helix</keyword>
<keyword id="KW-0832">Ubl conjugation</keyword>
<feature type="chain" id="PRO_0000179162" description="Synaptophysin">
    <location>
        <begin position="1"/>
        <end position="314"/>
    </location>
</feature>
<feature type="topological domain" description="Cytoplasmic" evidence="4">
    <location>
        <begin position="1"/>
        <end position="25"/>
    </location>
</feature>
<feature type="transmembrane region" description="Helical" evidence="4">
    <location>
        <begin position="26"/>
        <end position="49"/>
    </location>
</feature>
<feature type="topological domain" description="Vesicular" evidence="4">
    <location>
        <begin position="50"/>
        <end position="107"/>
    </location>
</feature>
<feature type="transmembrane region" description="Helical" evidence="4">
    <location>
        <begin position="108"/>
        <end position="131"/>
    </location>
</feature>
<feature type="topological domain" description="Cytoplasmic" evidence="4">
    <location>
        <begin position="132"/>
        <end position="138"/>
    </location>
</feature>
<feature type="transmembrane region" description="Helical" evidence="4">
    <location>
        <begin position="139"/>
        <end position="162"/>
    </location>
</feature>
<feature type="topological domain" description="Vesicular" evidence="4">
    <location>
        <begin position="163"/>
        <end position="200"/>
    </location>
</feature>
<feature type="transmembrane region" description="Helical" evidence="4">
    <location>
        <begin position="201"/>
        <end position="224"/>
    </location>
</feature>
<feature type="topological domain" description="Cytoplasmic" evidence="4">
    <location>
        <begin position="225"/>
        <end position="314"/>
    </location>
</feature>
<feature type="domain" description="MARVEL" evidence="5">
    <location>
        <begin position="21"/>
        <end position="228"/>
    </location>
</feature>
<feature type="region of interest" description="Disordered" evidence="6">
    <location>
        <begin position="239"/>
        <end position="314"/>
    </location>
</feature>
<feature type="region of interest" description="Repeats, Gly-rich">
    <location>
        <begin position="255"/>
        <end position="305"/>
    </location>
</feature>
<feature type="compositionally biased region" description="Gly residues" evidence="6">
    <location>
        <begin position="254"/>
        <end position="264"/>
    </location>
</feature>
<feature type="compositionally biased region" description="Low complexity" evidence="6">
    <location>
        <begin position="265"/>
        <end position="282"/>
    </location>
</feature>
<feature type="compositionally biased region" description="Gly residues" evidence="6">
    <location>
        <begin position="283"/>
        <end position="303"/>
    </location>
</feature>
<feature type="modified residue" description="Phosphotyrosine" evidence="11 12">
    <location>
        <position position="81"/>
    </location>
</feature>
<feature type="modified residue" description="Phosphothreonine" evidence="4">
    <location>
        <position position="227"/>
    </location>
</feature>
<feature type="modified residue" description="Phosphotyrosine" evidence="4">
    <location>
        <position position="279"/>
    </location>
</feature>
<feature type="modified residue" description="Phosphotyrosine" evidence="4">
    <location>
        <position position="296"/>
    </location>
</feature>
<feature type="glycosylation site" description="N-linked (GlcNAc...) asparagine" evidence="4">
    <location>
        <position position="59"/>
    </location>
</feature>
<feature type="sequence conflict" description="In Ref. 2; CAA65084." evidence="10" ref="2">
    <original>A</original>
    <variation>G</variation>
    <location>
        <position position="105"/>
    </location>
</feature>
<proteinExistence type="evidence at protein level"/>
<organism>
    <name type="scientific">Mus musculus</name>
    <name type="common">Mouse</name>
    <dbReference type="NCBI Taxonomy" id="10090"/>
    <lineage>
        <taxon>Eukaryota</taxon>
        <taxon>Metazoa</taxon>
        <taxon>Chordata</taxon>
        <taxon>Craniata</taxon>
        <taxon>Vertebrata</taxon>
        <taxon>Euteleostomi</taxon>
        <taxon>Mammalia</taxon>
        <taxon>Eutheria</taxon>
        <taxon>Euarchontoglires</taxon>
        <taxon>Glires</taxon>
        <taxon>Rodentia</taxon>
        <taxon>Myomorpha</taxon>
        <taxon>Muroidea</taxon>
        <taxon>Muridae</taxon>
        <taxon>Murinae</taxon>
        <taxon>Mus</taxon>
        <taxon>Mus</taxon>
    </lineage>
</organism>
<comment type="function">
    <text evidence="1 7">Possibly involved in structural functions as organizing other membrane components or in targeting the vesicles to the plasma membrane (By similarity). Involved in the regulation of short-term and long-term synaptic plasticity.</text>
</comment>
<comment type="subunit">
    <text evidence="3 8">Homohexamer or homotetramer. Interacts with SRCIN1 (By similarity). Interacts with VAMP2; the interaction is inhibited by interaction of VAPM2 with SEPT8 (PubMed:19196426).</text>
</comment>
<comment type="subcellular location">
    <subcellularLocation>
        <location evidence="9">Cytoplasmic vesicle</location>
        <location evidence="9">Secretory vesicle</location>
        <location evidence="9">Synaptic vesicle membrane</location>
        <topology evidence="4">Multi-pass membrane protein</topology>
    </subcellularLocation>
    <subcellularLocation>
        <location evidence="3">Synapse</location>
        <location evidence="3">Synaptosome</location>
    </subcellularLocation>
</comment>
<comment type="domain">
    <text>The calcium-binding activity is thought to be localized in the cytoplasmic tail of the protein.</text>
</comment>
<comment type="PTM">
    <text evidence="1">Ubiquitinated; mediated by SIAH1 or SIAH2 and leading to its subsequent proteasomal degradation.</text>
</comment>
<comment type="PTM">
    <text evidence="2">Phosphorylated by SRC.</text>
</comment>
<comment type="disruption phenotype">
    <text evidence="7">Mice lackin both SYNGR1 and SYP show normal brain structure and composition, but impaired short-term and long-term synaptic plasticity.</text>
</comment>
<comment type="similarity">
    <text evidence="10">Belongs to the synaptophysin/synaptobrevin family.</text>
</comment>